<keyword id="KW-0067">ATP-binding</keyword>
<keyword id="KW-1003">Cell membrane</keyword>
<keyword id="KW-1015">Disulfide bond</keyword>
<keyword id="KW-0245">EGF-like domain</keyword>
<keyword id="KW-0325">Glycoprotein</keyword>
<keyword id="KW-0418">Kinase</keyword>
<keyword id="KW-0430">Lectin</keyword>
<keyword id="KW-0472">Membrane</keyword>
<keyword id="KW-0547">Nucleotide-binding</keyword>
<keyword id="KW-0597">Phosphoprotein</keyword>
<keyword id="KW-0675">Receptor</keyword>
<keyword id="KW-1185">Reference proteome</keyword>
<keyword id="KW-0723">Serine/threonine-protein kinase</keyword>
<keyword id="KW-0732">Signal</keyword>
<keyword id="KW-0808">Transferase</keyword>
<keyword id="KW-0812">Transmembrane</keyword>
<keyword id="KW-1133">Transmembrane helix</keyword>
<protein>
    <recommendedName>
        <fullName>Putative G-type lectin S-receptor-like serine/threonine-protein kinase At1g61610</fullName>
        <ecNumber>2.7.11.1</ecNumber>
    </recommendedName>
</protein>
<organism>
    <name type="scientific">Arabidopsis thaliana</name>
    <name type="common">Mouse-ear cress</name>
    <dbReference type="NCBI Taxonomy" id="3702"/>
    <lineage>
        <taxon>Eukaryota</taxon>
        <taxon>Viridiplantae</taxon>
        <taxon>Streptophyta</taxon>
        <taxon>Embryophyta</taxon>
        <taxon>Tracheophyta</taxon>
        <taxon>Spermatophyta</taxon>
        <taxon>Magnoliopsida</taxon>
        <taxon>eudicotyledons</taxon>
        <taxon>Gunneridae</taxon>
        <taxon>Pentapetalae</taxon>
        <taxon>rosids</taxon>
        <taxon>malvids</taxon>
        <taxon>Brassicales</taxon>
        <taxon>Brassicaceae</taxon>
        <taxon>Camelineae</taxon>
        <taxon>Arabidopsis</taxon>
    </lineage>
</organism>
<dbReference type="EC" id="2.7.11.1"/>
<dbReference type="EMBL" id="AC005850">
    <property type="protein sequence ID" value="AAD25549.1"/>
    <property type="molecule type" value="Genomic_DNA"/>
</dbReference>
<dbReference type="EMBL" id="CP002684">
    <property type="protein sequence ID" value="AEE33862.1"/>
    <property type="molecule type" value="Genomic_DNA"/>
</dbReference>
<dbReference type="PIR" id="E96641">
    <property type="entry name" value="E96641"/>
</dbReference>
<dbReference type="RefSeq" id="NP_176355.1">
    <property type="nucleotide sequence ID" value="NM_104843.2"/>
</dbReference>
<dbReference type="SMR" id="Q9SY89"/>
<dbReference type="BioGRID" id="27680">
    <property type="interactions" value="21"/>
</dbReference>
<dbReference type="FunCoup" id="Q9SY89">
    <property type="interactions" value="1"/>
</dbReference>
<dbReference type="IntAct" id="Q9SY89">
    <property type="interactions" value="21"/>
</dbReference>
<dbReference type="STRING" id="3702.Q9SY89"/>
<dbReference type="GlyGen" id="Q9SY89">
    <property type="glycosylation" value="10 sites"/>
</dbReference>
<dbReference type="iPTMnet" id="Q9SY89"/>
<dbReference type="PaxDb" id="3702-AT1G61610.1"/>
<dbReference type="ProteomicsDB" id="243184"/>
<dbReference type="EnsemblPlants" id="AT1G61610.1">
    <property type="protein sequence ID" value="AT1G61610.1"/>
    <property type="gene ID" value="AT1G61610"/>
</dbReference>
<dbReference type="GeneID" id="842457"/>
<dbReference type="Gramene" id="AT1G61610.1">
    <property type="protein sequence ID" value="AT1G61610.1"/>
    <property type="gene ID" value="AT1G61610"/>
</dbReference>
<dbReference type="KEGG" id="ath:AT1G61610"/>
<dbReference type="Araport" id="AT1G61610"/>
<dbReference type="TAIR" id="AT1G61610"/>
<dbReference type="eggNOG" id="ENOG502QSUU">
    <property type="taxonomic scope" value="Eukaryota"/>
</dbReference>
<dbReference type="HOGENOM" id="CLU_000288_116_7_1"/>
<dbReference type="InParanoid" id="Q9SY89"/>
<dbReference type="OMA" id="WRKRWEI"/>
<dbReference type="PhylomeDB" id="Q9SY89"/>
<dbReference type="PRO" id="PR:Q9SY89"/>
<dbReference type="Proteomes" id="UP000006548">
    <property type="component" value="Chromosome 1"/>
</dbReference>
<dbReference type="ExpressionAtlas" id="Q9SY89">
    <property type="expression patterns" value="baseline and differential"/>
</dbReference>
<dbReference type="GO" id="GO:0005886">
    <property type="term" value="C:plasma membrane"/>
    <property type="evidence" value="ECO:0007669"/>
    <property type="project" value="UniProtKB-SubCell"/>
</dbReference>
<dbReference type="GO" id="GO:0005524">
    <property type="term" value="F:ATP binding"/>
    <property type="evidence" value="ECO:0007669"/>
    <property type="project" value="UniProtKB-KW"/>
</dbReference>
<dbReference type="GO" id="GO:0005516">
    <property type="term" value="F:calmodulin binding"/>
    <property type="evidence" value="ECO:0000250"/>
    <property type="project" value="UniProtKB"/>
</dbReference>
<dbReference type="GO" id="GO:0030246">
    <property type="term" value="F:carbohydrate binding"/>
    <property type="evidence" value="ECO:0007669"/>
    <property type="project" value="UniProtKB-KW"/>
</dbReference>
<dbReference type="GO" id="GO:0106310">
    <property type="term" value="F:protein serine kinase activity"/>
    <property type="evidence" value="ECO:0007669"/>
    <property type="project" value="RHEA"/>
</dbReference>
<dbReference type="GO" id="GO:0004674">
    <property type="term" value="F:protein serine/threonine kinase activity"/>
    <property type="evidence" value="ECO:0000250"/>
    <property type="project" value="UniProtKB"/>
</dbReference>
<dbReference type="GO" id="GO:0031625">
    <property type="term" value="F:ubiquitin protein ligase binding"/>
    <property type="evidence" value="ECO:0007669"/>
    <property type="project" value="UniProtKB-ARBA"/>
</dbReference>
<dbReference type="GO" id="GO:0048544">
    <property type="term" value="P:recognition of pollen"/>
    <property type="evidence" value="ECO:0007669"/>
    <property type="project" value="InterPro"/>
</dbReference>
<dbReference type="CDD" id="cd00028">
    <property type="entry name" value="B_lectin"/>
    <property type="match status" value="1"/>
</dbReference>
<dbReference type="CDD" id="cd01098">
    <property type="entry name" value="PAN_AP_plant"/>
    <property type="match status" value="1"/>
</dbReference>
<dbReference type="CDD" id="cd14066">
    <property type="entry name" value="STKc_IRAK"/>
    <property type="match status" value="1"/>
</dbReference>
<dbReference type="FunFam" id="1.10.510.10:FF:000345">
    <property type="entry name" value="G-type lectin S-receptor-like serine/threonine-protein kinase"/>
    <property type="match status" value="1"/>
</dbReference>
<dbReference type="FunFam" id="2.90.10.10:FF:000005">
    <property type="entry name" value="G-type lectin S-receptor-like serine/threonine-protein kinase"/>
    <property type="match status" value="1"/>
</dbReference>
<dbReference type="FunFam" id="3.30.200.20:FF:000330">
    <property type="entry name" value="G-type lectin S-receptor-like serine/threonine-protein kinase At4g03230"/>
    <property type="match status" value="1"/>
</dbReference>
<dbReference type="Gene3D" id="2.90.10.10">
    <property type="entry name" value="Bulb-type lectin domain"/>
    <property type="match status" value="1"/>
</dbReference>
<dbReference type="Gene3D" id="3.30.200.20">
    <property type="entry name" value="Phosphorylase Kinase, domain 1"/>
    <property type="match status" value="1"/>
</dbReference>
<dbReference type="Gene3D" id="1.10.510.10">
    <property type="entry name" value="Transferase(Phosphotransferase) domain 1"/>
    <property type="match status" value="1"/>
</dbReference>
<dbReference type="InterPro" id="IPR001480">
    <property type="entry name" value="Bulb-type_lectin_dom"/>
</dbReference>
<dbReference type="InterPro" id="IPR036426">
    <property type="entry name" value="Bulb-type_lectin_dom_sf"/>
</dbReference>
<dbReference type="InterPro" id="IPR000742">
    <property type="entry name" value="EGF-like_dom"/>
</dbReference>
<dbReference type="InterPro" id="IPR011009">
    <property type="entry name" value="Kinase-like_dom_sf"/>
</dbReference>
<dbReference type="InterPro" id="IPR003609">
    <property type="entry name" value="Pan_app"/>
</dbReference>
<dbReference type="InterPro" id="IPR000719">
    <property type="entry name" value="Prot_kinase_dom"/>
</dbReference>
<dbReference type="InterPro" id="IPR017441">
    <property type="entry name" value="Protein_kinase_ATP_BS"/>
</dbReference>
<dbReference type="InterPro" id="IPR000858">
    <property type="entry name" value="S_locus_glycoprot_dom"/>
</dbReference>
<dbReference type="InterPro" id="IPR001245">
    <property type="entry name" value="Ser-Thr/Tyr_kinase_cat_dom"/>
</dbReference>
<dbReference type="InterPro" id="IPR008271">
    <property type="entry name" value="Ser/Thr_kinase_AS"/>
</dbReference>
<dbReference type="InterPro" id="IPR024171">
    <property type="entry name" value="SRK-like_kinase"/>
</dbReference>
<dbReference type="PANTHER" id="PTHR27002">
    <property type="entry name" value="RECEPTOR-LIKE SERINE/THREONINE-PROTEIN KINASE SD1-8"/>
    <property type="match status" value="1"/>
</dbReference>
<dbReference type="PANTHER" id="PTHR27002:SF932">
    <property type="entry name" value="RECEPTOR-LIKE SERINE_THREONINE-PROTEIN KINASE"/>
    <property type="match status" value="1"/>
</dbReference>
<dbReference type="Pfam" id="PF01453">
    <property type="entry name" value="B_lectin"/>
    <property type="match status" value="1"/>
</dbReference>
<dbReference type="Pfam" id="PF08276">
    <property type="entry name" value="PAN_2"/>
    <property type="match status" value="1"/>
</dbReference>
<dbReference type="Pfam" id="PF07714">
    <property type="entry name" value="PK_Tyr_Ser-Thr"/>
    <property type="match status" value="1"/>
</dbReference>
<dbReference type="Pfam" id="PF00954">
    <property type="entry name" value="S_locus_glycop"/>
    <property type="match status" value="1"/>
</dbReference>
<dbReference type="PIRSF" id="PIRSF000641">
    <property type="entry name" value="SRK"/>
    <property type="match status" value="1"/>
</dbReference>
<dbReference type="SMART" id="SM00108">
    <property type="entry name" value="B_lectin"/>
    <property type="match status" value="1"/>
</dbReference>
<dbReference type="SMART" id="SM00473">
    <property type="entry name" value="PAN_AP"/>
    <property type="match status" value="1"/>
</dbReference>
<dbReference type="SMART" id="SM00220">
    <property type="entry name" value="S_TKc"/>
    <property type="match status" value="1"/>
</dbReference>
<dbReference type="SUPFAM" id="SSF51110">
    <property type="entry name" value="alpha-D-mannose-specific plant lectins"/>
    <property type="match status" value="1"/>
</dbReference>
<dbReference type="SUPFAM" id="SSF56112">
    <property type="entry name" value="Protein kinase-like (PK-like)"/>
    <property type="match status" value="1"/>
</dbReference>
<dbReference type="PROSITE" id="PS50927">
    <property type="entry name" value="BULB_LECTIN"/>
    <property type="match status" value="1"/>
</dbReference>
<dbReference type="PROSITE" id="PS50026">
    <property type="entry name" value="EGF_3"/>
    <property type="match status" value="1"/>
</dbReference>
<dbReference type="PROSITE" id="PS50948">
    <property type="entry name" value="PAN"/>
    <property type="match status" value="1"/>
</dbReference>
<dbReference type="PROSITE" id="PS00107">
    <property type="entry name" value="PROTEIN_KINASE_ATP"/>
    <property type="match status" value="1"/>
</dbReference>
<dbReference type="PROSITE" id="PS50011">
    <property type="entry name" value="PROTEIN_KINASE_DOM"/>
    <property type="match status" value="1"/>
</dbReference>
<dbReference type="PROSITE" id="PS00108">
    <property type="entry name" value="PROTEIN_KINASE_ST"/>
    <property type="match status" value="1"/>
</dbReference>
<sequence length="842" mass="95382">MAGFNRNLTLVTTLLIFHQLCSNVSCSTSNSFTRNHTIREGDSLISEDESFELGFFTPKNSTLRYVGIWYKNIEPQTVVWVANREKPLLDHKGALKIADDGNLVIVNGQNETIWSTNVEPESNNTVAVLFKTGDLVLCSDSDRRKWYWESFNNPTDTFLPGMRVRVNPSLGENRAFIPWKSESDPSPGKYSMGIDPVGALEIVIWEGEKRKWRSGPWNSAIFTGIPDMLRFTNYIYGFKLSSPPDRDGSVYFTYVASDSSDFLRFWIRPDGVEEQFRWNKDIRNWNLLQWKPSTECEKYNRCGNYSVCDDSKEFDSGKCSCIDGFEPVHQDQWNNRDFSGGCQRRVPLNCNQSLVAGQEDGFTVLKGIKVPDFGSVVLHNNSETCKDVCARDCSCKAYALVVGIGCMIWTRDLIDMEHFERGGNSINIRLAGSKLGGGKENSTLWIIVFSVIGAFLLGLCIWILWKFKKSLKAFLWKKKDITVSDIIENRDYSSSPIKVLVGDQVDTPDLPIFSFDSVASATGDFAEENKLGQGGFGTVYKGNFSEGREIAVKRLSGKSKQGLEEFKNEILLIAKLQHRNLVRLLGCCIEDNEKMLLYEYMPNKSLDRFLFDESKQGSLDWRKRWEVIGGIARGLLYLHRDSRLKIIHRDLKASNILLDTEMNPKISDFGMARIFNYRQDHANTIRVVGTYGYMAPEYAMEGIFSEKSDVYSFGVLILEIVSGRKNVSFRGTDHGSLIGYAWHLWSQGKTKEMIDPIVKDTRDVTEAMRCIHVGMLCTQDSVIHRPNMGSVLLMLESQTSQLPPPRQPTFHSFLNSGDIELNFDGHDVASVNDVTFTTIVGR</sequence>
<proteinExistence type="inferred from homology"/>
<comment type="catalytic activity">
    <reaction>
        <text>L-seryl-[protein] + ATP = O-phospho-L-seryl-[protein] + ADP + H(+)</text>
        <dbReference type="Rhea" id="RHEA:17989"/>
        <dbReference type="Rhea" id="RHEA-COMP:9863"/>
        <dbReference type="Rhea" id="RHEA-COMP:11604"/>
        <dbReference type="ChEBI" id="CHEBI:15378"/>
        <dbReference type="ChEBI" id="CHEBI:29999"/>
        <dbReference type="ChEBI" id="CHEBI:30616"/>
        <dbReference type="ChEBI" id="CHEBI:83421"/>
        <dbReference type="ChEBI" id="CHEBI:456216"/>
        <dbReference type="EC" id="2.7.11.1"/>
    </reaction>
</comment>
<comment type="catalytic activity">
    <reaction>
        <text>L-threonyl-[protein] + ATP = O-phospho-L-threonyl-[protein] + ADP + H(+)</text>
        <dbReference type="Rhea" id="RHEA:46608"/>
        <dbReference type="Rhea" id="RHEA-COMP:11060"/>
        <dbReference type="Rhea" id="RHEA-COMP:11605"/>
        <dbReference type="ChEBI" id="CHEBI:15378"/>
        <dbReference type="ChEBI" id="CHEBI:30013"/>
        <dbReference type="ChEBI" id="CHEBI:30616"/>
        <dbReference type="ChEBI" id="CHEBI:61977"/>
        <dbReference type="ChEBI" id="CHEBI:456216"/>
        <dbReference type="EC" id="2.7.11.1"/>
    </reaction>
</comment>
<comment type="subcellular location">
    <subcellularLocation>
        <location evidence="1">Cell membrane</location>
        <topology evidence="1">Single-pass type I membrane protein</topology>
    </subcellularLocation>
</comment>
<comment type="similarity">
    <text evidence="6">Belongs to the protein kinase superfamily. Ser/Thr protein kinase family.</text>
</comment>
<accession>Q9SY89</accession>
<name>Y1661_ARATH</name>
<reference key="1">
    <citation type="journal article" date="2000" name="Nature">
        <title>Sequence and analysis of chromosome 1 of the plant Arabidopsis thaliana.</title>
        <authorList>
            <person name="Theologis A."/>
            <person name="Ecker J.R."/>
            <person name="Palm C.J."/>
            <person name="Federspiel N.A."/>
            <person name="Kaul S."/>
            <person name="White O."/>
            <person name="Alonso J."/>
            <person name="Altafi H."/>
            <person name="Araujo R."/>
            <person name="Bowman C.L."/>
            <person name="Brooks S.Y."/>
            <person name="Buehler E."/>
            <person name="Chan A."/>
            <person name="Chao Q."/>
            <person name="Chen H."/>
            <person name="Cheuk R.F."/>
            <person name="Chin C.W."/>
            <person name="Chung M.K."/>
            <person name="Conn L."/>
            <person name="Conway A.B."/>
            <person name="Conway A.R."/>
            <person name="Creasy T.H."/>
            <person name="Dewar K."/>
            <person name="Dunn P."/>
            <person name="Etgu P."/>
            <person name="Feldblyum T.V."/>
            <person name="Feng J.-D."/>
            <person name="Fong B."/>
            <person name="Fujii C.Y."/>
            <person name="Gill J.E."/>
            <person name="Goldsmith A.D."/>
            <person name="Haas B."/>
            <person name="Hansen N.F."/>
            <person name="Hughes B."/>
            <person name="Huizar L."/>
            <person name="Hunter J.L."/>
            <person name="Jenkins J."/>
            <person name="Johnson-Hopson C."/>
            <person name="Khan S."/>
            <person name="Khaykin E."/>
            <person name="Kim C.J."/>
            <person name="Koo H.L."/>
            <person name="Kremenetskaia I."/>
            <person name="Kurtz D.B."/>
            <person name="Kwan A."/>
            <person name="Lam B."/>
            <person name="Langin-Hooper S."/>
            <person name="Lee A."/>
            <person name="Lee J.M."/>
            <person name="Lenz C.A."/>
            <person name="Li J.H."/>
            <person name="Li Y.-P."/>
            <person name="Lin X."/>
            <person name="Liu S.X."/>
            <person name="Liu Z.A."/>
            <person name="Luros J.S."/>
            <person name="Maiti R."/>
            <person name="Marziali A."/>
            <person name="Militscher J."/>
            <person name="Miranda M."/>
            <person name="Nguyen M."/>
            <person name="Nierman W.C."/>
            <person name="Osborne B.I."/>
            <person name="Pai G."/>
            <person name="Peterson J."/>
            <person name="Pham P.K."/>
            <person name="Rizzo M."/>
            <person name="Rooney T."/>
            <person name="Rowley D."/>
            <person name="Sakano H."/>
            <person name="Salzberg S.L."/>
            <person name="Schwartz J.R."/>
            <person name="Shinn P."/>
            <person name="Southwick A.M."/>
            <person name="Sun H."/>
            <person name="Tallon L.J."/>
            <person name="Tambunga G."/>
            <person name="Toriumi M.J."/>
            <person name="Town C.D."/>
            <person name="Utterback T."/>
            <person name="Van Aken S."/>
            <person name="Vaysberg M."/>
            <person name="Vysotskaia V.S."/>
            <person name="Walker M."/>
            <person name="Wu D."/>
            <person name="Yu G."/>
            <person name="Fraser C.M."/>
            <person name="Venter J.C."/>
            <person name="Davis R.W."/>
        </authorList>
    </citation>
    <scope>NUCLEOTIDE SEQUENCE [LARGE SCALE GENOMIC DNA]</scope>
    <source>
        <strain>cv. Columbia</strain>
    </source>
</reference>
<reference key="2">
    <citation type="journal article" date="2017" name="Plant J.">
        <title>Araport11: a complete reannotation of the Arabidopsis thaliana reference genome.</title>
        <authorList>
            <person name="Cheng C.Y."/>
            <person name="Krishnakumar V."/>
            <person name="Chan A.P."/>
            <person name="Thibaud-Nissen F."/>
            <person name="Schobel S."/>
            <person name="Town C.D."/>
        </authorList>
    </citation>
    <scope>GENOME REANNOTATION</scope>
    <source>
        <strain>cv. Columbia</strain>
    </source>
</reference>
<gene>
    <name type="ordered locus">At1g61610</name>
    <name type="ORF">T25B24.4</name>
</gene>
<evidence type="ECO:0000250" key="1"/>
<evidence type="ECO:0000250" key="2">
    <source>
        <dbReference type="UniProtKB" id="Q9LPZ9"/>
    </source>
</evidence>
<evidence type="ECO:0000255" key="3"/>
<evidence type="ECO:0000255" key="4">
    <source>
        <dbReference type="PROSITE-ProRule" id="PRU00038"/>
    </source>
</evidence>
<evidence type="ECO:0000255" key="5">
    <source>
        <dbReference type="PROSITE-ProRule" id="PRU00076"/>
    </source>
</evidence>
<evidence type="ECO:0000255" key="6">
    <source>
        <dbReference type="PROSITE-ProRule" id="PRU00159"/>
    </source>
</evidence>
<evidence type="ECO:0000255" key="7">
    <source>
        <dbReference type="PROSITE-ProRule" id="PRU00315"/>
    </source>
</evidence>
<evidence type="ECO:0000255" key="8">
    <source>
        <dbReference type="PROSITE-ProRule" id="PRU10027"/>
    </source>
</evidence>
<feature type="signal peptide" evidence="3">
    <location>
        <begin position="1"/>
        <end position="22"/>
    </location>
</feature>
<feature type="chain" id="PRO_0000401324" description="Putative G-type lectin S-receptor-like serine/threonine-protein kinase At1g61610">
    <location>
        <begin position="23"/>
        <end position="842"/>
    </location>
</feature>
<feature type="topological domain" description="Extracellular" evidence="3">
    <location>
        <begin position="23"/>
        <end position="443"/>
    </location>
</feature>
<feature type="transmembrane region" description="Helical" evidence="3">
    <location>
        <begin position="444"/>
        <end position="464"/>
    </location>
</feature>
<feature type="topological domain" description="Cytoplasmic" evidence="3">
    <location>
        <begin position="465"/>
        <end position="842"/>
    </location>
</feature>
<feature type="domain" description="Bulb-type lectin" evidence="4">
    <location>
        <begin position="29"/>
        <end position="150"/>
    </location>
</feature>
<feature type="domain" description="EGF-like" evidence="5">
    <location>
        <begin position="292"/>
        <end position="331"/>
    </location>
</feature>
<feature type="domain" description="PAN" evidence="7">
    <location>
        <begin position="350"/>
        <end position="431"/>
    </location>
</feature>
<feature type="domain" description="Protein kinase" evidence="6">
    <location>
        <begin position="525"/>
        <end position="814"/>
    </location>
</feature>
<feature type="region of interest" description="CaM-binding" evidence="1">
    <location>
        <begin position="614"/>
        <end position="631"/>
    </location>
</feature>
<feature type="active site" description="Proton acceptor" evidence="6 8">
    <location>
        <position position="650"/>
    </location>
</feature>
<feature type="binding site" evidence="6">
    <location>
        <begin position="531"/>
        <end position="539"/>
    </location>
    <ligand>
        <name>ATP</name>
        <dbReference type="ChEBI" id="CHEBI:30616"/>
    </ligand>
</feature>
<feature type="binding site" evidence="6">
    <location>
        <position position="553"/>
    </location>
    <ligand>
        <name>ATP</name>
        <dbReference type="ChEBI" id="CHEBI:30616"/>
    </ligand>
</feature>
<feature type="modified residue" description="Phosphoserine" evidence="2">
    <location>
        <position position="559"/>
    </location>
</feature>
<feature type="modified residue" description="Phosphoserine" evidence="2">
    <location>
        <position position="654"/>
    </location>
</feature>
<feature type="modified residue" description="Phosphoserine" evidence="2">
    <location>
        <position position="667"/>
    </location>
</feature>
<feature type="modified residue" description="Phosphothreonine" evidence="2">
    <location>
        <position position="684"/>
    </location>
</feature>
<feature type="modified residue" description="Phosphoserine" evidence="2">
    <location>
        <position position="728"/>
    </location>
</feature>
<feature type="modified residue" description="Phosphoserine" evidence="2">
    <location>
        <position position="830"/>
    </location>
</feature>
<feature type="modified residue" description="Phosphothreonine" evidence="2">
    <location>
        <position position="837"/>
    </location>
</feature>
<feature type="glycosylation site" description="N-linked (GlcNAc...) asparagine" evidence="3">
    <location>
        <position position="7"/>
    </location>
</feature>
<feature type="glycosylation site" description="N-linked (GlcNAc...) asparagine" evidence="3">
    <location>
        <position position="23"/>
    </location>
</feature>
<feature type="glycosylation site" description="N-linked (GlcNAc...) asparagine" evidence="3">
    <location>
        <position position="35"/>
    </location>
</feature>
<feature type="glycosylation site" description="N-linked (GlcNAc...) asparagine" evidence="3">
    <location>
        <position position="60"/>
    </location>
</feature>
<feature type="glycosylation site" description="N-linked (GlcNAc...) asparagine" evidence="3">
    <location>
        <position position="110"/>
    </location>
</feature>
<feature type="glycosylation site" description="N-linked (GlcNAc...) asparagine" evidence="3">
    <location>
        <position position="123"/>
    </location>
</feature>
<feature type="glycosylation site" description="N-linked (GlcNAc...) asparagine" evidence="3">
    <location>
        <position position="304"/>
    </location>
</feature>
<feature type="glycosylation site" description="N-linked (GlcNAc...) asparagine" evidence="3">
    <location>
        <position position="351"/>
    </location>
</feature>
<feature type="glycosylation site" description="N-linked (GlcNAc...) asparagine" evidence="3">
    <location>
        <position position="380"/>
    </location>
</feature>
<feature type="glycosylation site" description="N-linked (GlcNAc...) asparagine" evidence="3">
    <location>
        <position position="441"/>
    </location>
</feature>
<feature type="disulfide bond" evidence="1">
    <location>
        <begin position="296"/>
        <end position="308"/>
    </location>
</feature>
<feature type="disulfide bond" evidence="1">
    <location>
        <begin position="302"/>
        <end position="319"/>
    </location>
</feature>
<feature type="disulfide bond" evidence="1">
    <location>
        <begin position="385"/>
        <end position="406"/>
    </location>
</feature>
<feature type="disulfide bond" evidence="1">
    <location>
        <begin position="389"/>
        <end position="395"/>
    </location>
</feature>